<name>POLN_RUBVT</name>
<protein>
    <recommendedName>
        <fullName>Non-structural polyprotein p200</fullName>
        <shortName>p200</shortName>
    </recommendedName>
    <component>
        <recommendedName>
            <fullName>Protease/methyltransferase p150</fullName>
            <shortName>p150</shortName>
            <ecNumber>3.4.22.-</ecNumber>
        </recommendedName>
    </component>
    <component>
        <recommendedName>
            <fullName>RNA-directed RNA polymerase p90</fullName>
            <shortName>p90</shortName>
            <ecNumber evidence="3">2.7.7.48</ecNumber>
            <ecNumber>3.6.1.15</ecNumber>
            <ecNumber>3.6.4.13</ecNumber>
        </recommendedName>
    </component>
</protein>
<feature type="chain" id="PRO_0000249223" description="Non-structural polyprotein p200">
    <location>
        <begin position="1"/>
        <end position="2116"/>
    </location>
</feature>
<feature type="chain" id="PRO_0000041226" description="Protease/methyltransferase p150">
    <location>
        <begin position="1"/>
        <end position="1301"/>
    </location>
</feature>
<feature type="chain" id="PRO_0000041227" description="RNA-directed RNA polymerase p90">
    <location>
        <begin position="1302"/>
        <end position="2116"/>
    </location>
</feature>
<feature type="domain" description="Alphavirus-like MT" evidence="5">
    <location>
        <begin position="57"/>
        <end position="247"/>
    </location>
</feature>
<feature type="domain" description="Macro" evidence="2">
    <location>
        <begin position="806"/>
        <end position="985"/>
    </location>
</feature>
<feature type="domain" description="Peptidase C27" evidence="6">
    <location>
        <begin position="1000"/>
        <end position="1301"/>
    </location>
</feature>
<feature type="domain" description="(+)RNA virus helicase ATP-binding" evidence="4">
    <location>
        <begin position="1320"/>
        <end position="1468"/>
    </location>
</feature>
<feature type="domain" description="(+)RNA virus helicase C-terminal" evidence="4">
    <location>
        <begin position="1469"/>
        <end position="1609"/>
    </location>
</feature>
<feature type="domain" description="RdRp catalytic" evidence="3">
    <location>
        <begin position="1870"/>
        <end position="1981"/>
    </location>
</feature>
<feature type="region of interest" description="Required for efficient proteolysis and P150-P90 interaction" evidence="1">
    <location>
        <begin position="36"/>
        <end position="49"/>
    </location>
</feature>
<feature type="region of interest" description="Disordered" evidence="7">
    <location>
        <begin position="457"/>
        <end position="477"/>
    </location>
</feature>
<feature type="region of interest" description="Disordered" evidence="7">
    <location>
        <begin position="712"/>
        <end position="805"/>
    </location>
</feature>
<feature type="region of interest" description="Disordered" evidence="7">
    <location>
        <begin position="992"/>
        <end position="1031"/>
    </location>
</feature>
<feature type="region of interest" description="Interaction with host CALM1" evidence="6">
    <location>
        <begin position="1152"/>
        <end position="1183"/>
    </location>
</feature>
<feature type="region of interest" description="EF-hand-like" evidence="6">
    <location>
        <begin position="1193"/>
        <end position="1228"/>
    </location>
</feature>
<feature type="region of interest" description="Involved in P150-P90 interaction" evidence="1">
    <location>
        <begin position="1700"/>
        <end position="1900"/>
    </location>
</feature>
<feature type="short sequence motif" description="PxxPxR; class II SH3-binding" evidence="1">
    <location>
        <begin position="727"/>
        <end position="732"/>
    </location>
</feature>
<feature type="short sequence motif" description="PxxPxR; class II SH3-binding" evidence="1">
    <location>
        <begin position="747"/>
        <end position="752"/>
    </location>
</feature>
<feature type="short sequence motif" description="PxxPxR; class II SH3-binding" evidence="1">
    <location>
        <begin position="761"/>
        <end position="766"/>
    </location>
</feature>
<feature type="short sequence motif" description="Human RB1 binding" evidence="1">
    <location>
        <begin position="1902"/>
        <end position="1906"/>
    </location>
</feature>
<feature type="compositionally biased region" description="Basic and acidic residues" evidence="7">
    <location>
        <begin position="457"/>
        <end position="467"/>
    </location>
</feature>
<feature type="compositionally biased region" description="Pro residues" evidence="7">
    <location>
        <begin position="721"/>
        <end position="730"/>
    </location>
</feature>
<feature type="compositionally biased region" description="Pro residues" evidence="7">
    <location>
        <begin position="745"/>
        <end position="776"/>
    </location>
</feature>
<feature type="active site" description="For cysteine protease activity" evidence="6">
    <location>
        <position position="1152"/>
    </location>
</feature>
<feature type="active site" description="For cysteine protease activity" evidence="6">
    <location>
        <position position="1273"/>
    </location>
</feature>
<feature type="binding site" evidence="6">
    <location>
        <position position="1175"/>
    </location>
    <ligand>
        <name>Zn(2+)</name>
        <dbReference type="ChEBI" id="CHEBI:29105"/>
    </ligand>
</feature>
<feature type="binding site" evidence="6">
    <location>
        <position position="1178"/>
    </location>
    <ligand>
        <name>Zn(2+)</name>
        <dbReference type="ChEBI" id="CHEBI:29105"/>
    </ligand>
</feature>
<feature type="binding site" evidence="6">
    <location>
        <position position="1227"/>
    </location>
    <ligand>
        <name>Zn(2+)</name>
        <dbReference type="ChEBI" id="CHEBI:29105"/>
    </ligand>
</feature>
<feature type="binding site" evidence="6">
    <location>
        <position position="1273"/>
    </location>
    <ligand>
        <name>Zn(2+)</name>
        <dbReference type="ChEBI" id="CHEBI:29105"/>
    </ligand>
</feature>
<feature type="binding site" evidence="4">
    <location>
        <begin position="1352"/>
        <end position="1359"/>
    </location>
    <ligand>
        <name>a ribonucleoside 5'-triphosphate</name>
        <dbReference type="ChEBI" id="CHEBI:61557"/>
    </ligand>
</feature>
<feature type="site" description="Cleavage; autocatalytic" evidence="6">
    <location>
        <begin position="1301"/>
        <end position="1302"/>
    </location>
</feature>
<feature type="sequence conflict" description="In Ref. 1; AAA88528." evidence="10" ref="1">
    <location>
        <position position="410"/>
    </location>
</feature>
<sequence length="2116" mass="230546">MEKLLDEVLAPGGPYNLTVGSWVRDHVRSIVEGAWEVRDVVTAAQKRAIVAVIPRPVFTQMQVSDHPALHAISRYTRRHWIEWGPKEALHVLIDPSPGLLREVARVERRWVALCLHRTARKLATALAETASEAWHADYVCALRGAPSGPFYVHPEDVPHGGRAVADRCLLYYTPMQMCELMRTIDATLLVAVDLWPVALAAHVGDDWDDLGIAWHLDHDGGCPADCRGAGAGPTPGYTRPCTTRIYQVLPDTAHPGRLYRCGPRLWTRDCAVAELSWEVAQHCGHQARVRAVRCTLPIRHVRSLQPSARVRLPDLVHLAEVGRWRWFSLPRPVFQRMLSYCKTLSPDAYYSERVFKFKNALCHSITLAGNVLQEGWKGTCAEEDALCAYVAFRAWQSNARLAGIMKGAKRCAADSLSVAGWLDTIWDAIKRFLGSVPLAERMEEWEQDAAVAAFDRGPLEDGGRHLDTVQPPKSPPRPEIAATWIVHAASEDRHCACAPRCDVPRERPSAPAGQPDDEALIPPWLFAERRALRCREWDFEALRARADTAAAPAPPAPRPARYPTVLYRHPAHHGPWLTLDEPGEADAALVLCDPLGQPLRGPERHFAAGAHMCAQARGLQAFVRVVPPPERPWADGGARAWAKFFRGCAWAQRLLGEPAVMHLPYTDGDVPQLIALALRTLAQQGAALALSVRDLPGGAAFDANAVTAAVRAGPRQSAAASPPPGDPPPPRRARRSQRHSDARGTPPPAPARDPPPPAPSPPAPPRAGDPVPPIPAGPADRARDAELEVACEPSGPPTSTRADPDSDIVESYARAAGPVHLRVRDIMDPPPGCKVVVNAANEGLLAGSGVCGAIFANATAALAANCRRLAPCPTGEAVATPGHGCGYTHIIHAVAPRRPRDPAALEEGEALLERAYRSIVALAAARRWACVACPLLGAGVYGWSAAESLRAALAATRTEPVERVSLHICHPDRATLTHASVLVGAGLAARRVSPPPTEPLASCPAGDPGRPAQRSASPPATPLGDATAPEPRGCQGCELCRYTRVTNDRAYVNLWLERDRGATSWAMRIPEVVVYGPEHLATHFPLNHYSVLKPAEVRPPRGMCGSDMWRCRGWHGMPQVRCTPSNAHAALCRTGVPPRASTRGGELDPNTCWLRAAANVAQAARACGAYTSAGCPKCAYGRALSEARTHEDFAALSQRWSASHADASPDGTGDPLDPLMETVGCACSRVWVGSEHEAPPDHLLVSLHRAPNGPWGVVLEVRARPEGGNPTGHFVCAVGGGPRRVSDRPHLWLAVPLSRGGGTCAATDEGLAQAYYDDLEVRRLGDDAMARAALASVQRPRKGPYNIRVWNMAAGAGKTTRILAAFTREDLYVCPTNALLHEIQAKLRARDIDIKNAATYERRLTKPLAAYRRIYIDEAFTLGGEYCAFVASQTTAEVICVGDRDQCGPHYANNCRTPVPDRWPTERSRHTWRFPDCWAARLRAGLDYDIEGERTGTFACNLWDGRQVDLHLAFSRETVRRLHEAGIRAYTVREAQGMSVGTACIHVGRDGTDVALALTRDLAIVSLTRASDALYLHELEDGSLRAAGLSAFLDAGALAELKEVPAGIDRVVAVEQAPPPLPPADGIPEAQDVPPFCPRTLEELVFGRAGHPHYADLNRVTEGEREVRYMRISRHLLNKNHTEMPGTERVLSAVCAVRRYRAGEDGSTLRTAVARQHPRPFRQIPPPRVTAGVAQEWRMTYLRERIDLTDVYTQMGVAARELTDRYARRYPEIFAGMCTAQSLSVPAFLKATLKCVDAALGPRDTEDCHAAQGKAGLEIRAWAKEWVQVMSPHFRAIQKIIMRALRPQFLVAAGHTEPEVDAWWQAHYTTNAIEVDFTEFDMNQTLATRDVELEISAALLGLPCAEDYRALRAGSYCTLRELGSTETGCERTSGEPATLLHNTTVAMCMAMRMVPKGVRWAGIFQGDDMVIFLPEGARSAALKWTPAEVGLFGFHIPVKHVSTPTPSFCGHVGTAAGLFHDVMHQAIKVLCRRFDPDVLEEQQVALLDRLRGVYAALPDTVAANAAYYDYSAERVLAIVRELTAYARGRGLDHPATIGALEEIQTPYARANLHDAD</sequence>
<accession>P13889</accession>
<organism>
    <name type="scientific">Rubella virus (strain Therien)</name>
    <name type="common">RUBV</name>
    <dbReference type="NCBI Taxonomy" id="11045"/>
    <lineage>
        <taxon>Viruses</taxon>
        <taxon>Riboviria</taxon>
        <taxon>Orthornavirae</taxon>
        <taxon>Kitrinoviricota</taxon>
        <taxon>Alsuviricetes</taxon>
        <taxon>Hepelivirales</taxon>
        <taxon>Matonaviridae</taxon>
        <taxon>Rubivirus</taxon>
        <taxon>Rubivirus rubellae</taxon>
    </lineage>
</organism>
<proteinExistence type="inferred from homology"/>
<reference key="1">
    <citation type="journal article" date="1990" name="Virology">
        <title>Sequence of the genome RNA of rubella virus: evidence for genetic rearrangement during togavirus evolution.</title>
        <authorList>
            <person name="Dominguez G."/>
            <person name="Wang C.Y."/>
            <person name="Frey T.K."/>
        </authorList>
    </citation>
    <scope>NUCLEOTIDE SEQUENCE [GENOMIC RNA]</scope>
</reference>
<reference key="2">
    <citation type="journal article" date="1988" name="Gene">
        <title>Sequence of the region coding for virion proteins C and E2 and the carboxy terminus of the nonstructural proteins of rubella virus: comparison with alphaviruses.</title>
        <authorList>
            <person name="Frey T.K."/>
            <person name="Marr L.D."/>
        </authorList>
    </citation>
    <scope>NUCLEOTIDE SEQUENCE [GENOMIC RNA] OF 1738-2116</scope>
</reference>
<reference key="3">
    <citation type="journal article" date="1997" name="Arch. Virol.">
        <title>Genomic sequence of the RA27/3 vaccine strain of rubella virus.</title>
        <authorList>
            <person name="Pugachev K.V."/>
            <person name="Abernathy E.S."/>
            <person name="Frey T.K."/>
        </authorList>
    </citation>
    <scope>SEQUENCE REVISION</scope>
</reference>
<reference key="4">
    <citation type="submission" date="2011-05" db="EMBL/GenBank/DDBJ databases">
        <authorList>
            <person name="Zhou Y."/>
            <person name="Frey T.K."/>
        </authorList>
    </citation>
    <scope>SEQUENCE REVISION TO 2087-2088</scope>
</reference>
<reference key="5">
    <citation type="journal article" date="1999" name="J. Virol.">
        <title>Intracellular distribution of rubella virus nonstructural protein P150.</title>
        <authorList>
            <person name="Kujala P."/>
            <person name="Ahola T."/>
            <person name="Ehsani N."/>
            <person name="Auvinen P."/>
            <person name="Vihinen H."/>
            <person name="Kaeaeriaeinen L."/>
        </authorList>
    </citation>
    <scope>SUBCELLULAR LOCATION (PROTEASE/METHYLTRANSFERASE P150)</scope>
</reference>
<reference key="6">
    <citation type="journal article" date="1994" name="Virology">
        <title>Characterization of rubella virus replication complexes using antibodies to double-stranded RNA.</title>
        <authorList>
            <person name="Lee J.Y."/>
            <person name="Marshall J.A."/>
            <person name="Bowden D.S."/>
        </authorList>
    </citation>
    <scope>SUBCELLULAR LOCATION (PROTEASE/METHYLTRANSFERASE P150)</scope>
</reference>
<keyword id="KW-0067">ATP-binding</keyword>
<keyword id="KW-0106">Calcium</keyword>
<keyword id="KW-0347">Helicase</keyword>
<keyword id="KW-1035">Host cytoplasm</keyword>
<keyword id="KW-1043">Host membrane</keyword>
<keyword id="KW-0378">Hydrolase</keyword>
<keyword id="KW-0472">Membrane</keyword>
<keyword id="KW-0479">Metal-binding</keyword>
<keyword id="KW-0547">Nucleotide-binding</keyword>
<keyword id="KW-0548">Nucleotidyltransferase</keyword>
<keyword id="KW-0645">Protease</keyword>
<keyword id="KW-1185">Reference proteome</keyword>
<keyword id="KW-0696">RNA-directed RNA polymerase</keyword>
<keyword id="KW-0788">Thiol protease</keyword>
<keyword id="KW-0808">Transferase</keyword>
<keyword id="KW-0693">Viral RNA replication</keyword>
<keyword id="KW-0862">Zinc</keyword>
<organismHost>
    <name type="scientific">Homo sapiens</name>
    <name type="common">Human</name>
    <dbReference type="NCBI Taxonomy" id="9606"/>
</organismHost>
<dbReference type="EC" id="3.4.22.-"/>
<dbReference type="EC" id="2.7.7.48" evidence="3"/>
<dbReference type="EC" id="3.6.1.15"/>
<dbReference type="EC" id="3.6.4.13"/>
<dbReference type="EMBL" id="M15240">
    <property type="protein sequence ID" value="AAA88528.2"/>
    <property type="molecule type" value="Genomic_RNA"/>
</dbReference>
<dbReference type="PIR" id="A35320">
    <property type="entry name" value="MNWVRN"/>
</dbReference>
<dbReference type="RefSeq" id="NP_062883.2">
    <property type="nucleotide sequence ID" value="NC_001545.2"/>
</dbReference>
<dbReference type="SMR" id="P13889"/>
<dbReference type="ELM" id="P13889"/>
<dbReference type="IntAct" id="P13889">
    <property type="interactions" value="1"/>
</dbReference>
<dbReference type="MEROPS" id="C27.001"/>
<dbReference type="GeneID" id="1502161"/>
<dbReference type="KEGG" id="vg:1502161"/>
<dbReference type="Proteomes" id="UP000000571">
    <property type="component" value="Segment"/>
</dbReference>
<dbReference type="GO" id="GO:0033644">
    <property type="term" value="C:host cell membrane"/>
    <property type="evidence" value="ECO:0007669"/>
    <property type="project" value="UniProtKB-SubCell"/>
</dbReference>
<dbReference type="GO" id="GO:0044220">
    <property type="term" value="C:host cell perinuclear region of cytoplasm"/>
    <property type="evidence" value="ECO:0007669"/>
    <property type="project" value="UniProtKB-SubCell"/>
</dbReference>
<dbReference type="GO" id="GO:0016020">
    <property type="term" value="C:membrane"/>
    <property type="evidence" value="ECO:0007669"/>
    <property type="project" value="UniProtKB-KW"/>
</dbReference>
<dbReference type="GO" id="GO:0005524">
    <property type="term" value="F:ATP binding"/>
    <property type="evidence" value="ECO:0007669"/>
    <property type="project" value="UniProtKB-KW"/>
</dbReference>
<dbReference type="GO" id="GO:0016887">
    <property type="term" value="F:ATP hydrolysis activity"/>
    <property type="evidence" value="ECO:0007669"/>
    <property type="project" value="RHEA"/>
</dbReference>
<dbReference type="GO" id="GO:0004197">
    <property type="term" value="F:cysteine-type endopeptidase activity"/>
    <property type="evidence" value="ECO:0007669"/>
    <property type="project" value="InterPro"/>
</dbReference>
<dbReference type="GO" id="GO:0046872">
    <property type="term" value="F:metal ion binding"/>
    <property type="evidence" value="ECO:0007669"/>
    <property type="project" value="UniProtKB-KW"/>
</dbReference>
<dbReference type="GO" id="GO:0008174">
    <property type="term" value="F:mRNA methyltransferase activity"/>
    <property type="evidence" value="ECO:0007669"/>
    <property type="project" value="InterPro"/>
</dbReference>
<dbReference type="GO" id="GO:0003723">
    <property type="term" value="F:RNA binding"/>
    <property type="evidence" value="ECO:0007669"/>
    <property type="project" value="InterPro"/>
</dbReference>
<dbReference type="GO" id="GO:0003724">
    <property type="term" value="F:RNA helicase activity"/>
    <property type="evidence" value="ECO:0007669"/>
    <property type="project" value="UniProtKB-EC"/>
</dbReference>
<dbReference type="GO" id="GO:0003968">
    <property type="term" value="F:RNA-directed RNA polymerase activity"/>
    <property type="evidence" value="ECO:0007669"/>
    <property type="project" value="UniProtKB-KW"/>
</dbReference>
<dbReference type="GO" id="GO:0006351">
    <property type="term" value="P:DNA-templated transcription"/>
    <property type="evidence" value="ECO:0007669"/>
    <property type="project" value="InterPro"/>
</dbReference>
<dbReference type="GO" id="GO:0016556">
    <property type="term" value="P:mRNA modification"/>
    <property type="evidence" value="ECO:0007669"/>
    <property type="project" value="InterPro"/>
</dbReference>
<dbReference type="GO" id="GO:0006508">
    <property type="term" value="P:proteolysis"/>
    <property type="evidence" value="ECO:0007669"/>
    <property type="project" value="UniProtKB-KW"/>
</dbReference>
<dbReference type="GO" id="GO:0006396">
    <property type="term" value="P:RNA processing"/>
    <property type="evidence" value="ECO:0007669"/>
    <property type="project" value="InterPro"/>
</dbReference>
<dbReference type="GO" id="GO:0039694">
    <property type="term" value="P:viral RNA genome replication"/>
    <property type="evidence" value="ECO:0007669"/>
    <property type="project" value="InterPro"/>
</dbReference>
<dbReference type="CDD" id="cd21557">
    <property type="entry name" value="Macro_X_Nsp3-like"/>
    <property type="match status" value="1"/>
</dbReference>
<dbReference type="CDD" id="cd23260">
    <property type="entry name" value="Matonaviridae_RdRp"/>
    <property type="match status" value="1"/>
</dbReference>
<dbReference type="Gene3D" id="3.40.220.10">
    <property type="entry name" value="Leucine Aminopeptidase, subunit E, domain 1"/>
    <property type="match status" value="1"/>
</dbReference>
<dbReference type="Gene3D" id="3.40.50.300">
    <property type="entry name" value="P-loop containing nucleotide triphosphate hydrolases"/>
    <property type="match status" value="1"/>
</dbReference>
<dbReference type="InterPro" id="IPR027351">
    <property type="entry name" value="(+)RNA_virus_helicase_core_dom"/>
</dbReference>
<dbReference type="InterPro" id="IPR002588">
    <property type="entry name" value="Alphavirus-like_MT_dom"/>
</dbReference>
<dbReference type="InterPro" id="IPR043502">
    <property type="entry name" value="DNA/RNA_pol_sf"/>
</dbReference>
<dbReference type="InterPro" id="IPR002589">
    <property type="entry name" value="Macro_dom"/>
</dbReference>
<dbReference type="InterPro" id="IPR043472">
    <property type="entry name" value="Macro_dom-like"/>
</dbReference>
<dbReference type="InterPro" id="IPR044371">
    <property type="entry name" value="Macro_X_NSP3-like"/>
</dbReference>
<dbReference type="InterPro" id="IPR047306">
    <property type="entry name" value="Matonaviridae_RdRp"/>
</dbReference>
<dbReference type="InterPro" id="IPR027417">
    <property type="entry name" value="P-loop_NTPase"/>
</dbReference>
<dbReference type="InterPro" id="IPR008738">
    <property type="entry name" value="Peptidase_C27"/>
</dbReference>
<dbReference type="InterPro" id="IPR001788">
    <property type="entry name" value="RNA-dep_RNA_pol_alsuvir"/>
</dbReference>
<dbReference type="InterPro" id="IPR007094">
    <property type="entry name" value="RNA-dir_pol_PSvirus"/>
</dbReference>
<dbReference type="InterPro" id="IPR022245">
    <property type="entry name" value="Rubi_NSP_C"/>
</dbReference>
<dbReference type="InterPro" id="IPR044070">
    <property type="entry name" value="RUBV_NS_PRO"/>
</dbReference>
<dbReference type="PANTHER" id="PTHR11106">
    <property type="entry name" value="GANGLIOSIDE INDUCED DIFFERENTIATION ASSOCIATED PROTEIN 2-RELATED"/>
    <property type="match status" value="1"/>
</dbReference>
<dbReference type="PANTHER" id="PTHR11106:SF27">
    <property type="entry name" value="MACRO DOMAIN-CONTAINING PROTEIN"/>
    <property type="match status" value="1"/>
</dbReference>
<dbReference type="Pfam" id="PF01661">
    <property type="entry name" value="Macro"/>
    <property type="match status" value="1"/>
</dbReference>
<dbReference type="Pfam" id="PF05407">
    <property type="entry name" value="Peptidase_C27"/>
    <property type="match status" value="1"/>
</dbReference>
<dbReference type="Pfam" id="PF00978">
    <property type="entry name" value="RdRP_2"/>
    <property type="match status" value="1"/>
</dbReference>
<dbReference type="Pfam" id="PF12601">
    <property type="entry name" value="Rubi_NSP_C"/>
    <property type="match status" value="1"/>
</dbReference>
<dbReference type="Pfam" id="PF01443">
    <property type="entry name" value="Viral_helicase1"/>
    <property type="match status" value="1"/>
</dbReference>
<dbReference type="SMART" id="SM00506">
    <property type="entry name" value="A1pp"/>
    <property type="match status" value="1"/>
</dbReference>
<dbReference type="SUPFAM" id="SSF56672">
    <property type="entry name" value="DNA/RNA polymerases"/>
    <property type="match status" value="1"/>
</dbReference>
<dbReference type="SUPFAM" id="SSF52949">
    <property type="entry name" value="Macro domain-like"/>
    <property type="match status" value="1"/>
</dbReference>
<dbReference type="SUPFAM" id="SSF52540">
    <property type="entry name" value="P-loop containing nucleoside triphosphate hydrolases"/>
    <property type="match status" value="1"/>
</dbReference>
<dbReference type="PROSITE" id="PS51743">
    <property type="entry name" value="ALPHAVIRUS_MT"/>
    <property type="match status" value="1"/>
</dbReference>
<dbReference type="PROSITE" id="PS51154">
    <property type="entry name" value="MACRO"/>
    <property type="match status" value="1"/>
</dbReference>
<dbReference type="PROSITE" id="PS51657">
    <property type="entry name" value="PSRV_HELICASE"/>
    <property type="match status" value="1"/>
</dbReference>
<dbReference type="PROSITE" id="PS50507">
    <property type="entry name" value="RDRP_SSRNA_POS"/>
    <property type="match status" value="1"/>
</dbReference>
<dbReference type="PROSITE" id="PS51889">
    <property type="entry name" value="RUBV_NS_PRO"/>
    <property type="match status" value="1"/>
</dbReference>
<evidence type="ECO:0000250" key="1">
    <source>
        <dbReference type="UniProtKB" id="Q86500"/>
    </source>
</evidence>
<evidence type="ECO:0000255" key="2">
    <source>
        <dbReference type="PROSITE-ProRule" id="PRU00490"/>
    </source>
</evidence>
<evidence type="ECO:0000255" key="3">
    <source>
        <dbReference type="PROSITE-ProRule" id="PRU00539"/>
    </source>
</evidence>
<evidence type="ECO:0000255" key="4">
    <source>
        <dbReference type="PROSITE-ProRule" id="PRU00990"/>
    </source>
</evidence>
<evidence type="ECO:0000255" key="5">
    <source>
        <dbReference type="PROSITE-ProRule" id="PRU01079"/>
    </source>
</evidence>
<evidence type="ECO:0000255" key="6">
    <source>
        <dbReference type="PROSITE-ProRule" id="PRU01237"/>
    </source>
</evidence>
<evidence type="ECO:0000256" key="7">
    <source>
        <dbReference type="SAM" id="MobiDB-lite"/>
    </source>
</evidence>
<evidence type="ECO:0000269" key="8">
    <source>
    </source>
</evidence>
<evidence type="ECO:0000269" key="9">
    <source>
    </source>
</evidence>
<evidence type="ECO:0000305" key="10"/>
<comment type="function">
    <molecule>Non-structural polyprotein p200</molecule>
    <text evidence="1">Probable principal replicase for the negative-strand DNA, which replicates the 40S (+) genomic RNA into (-) antigenomic RNA. It cannot replicate the (-) into (+) until cleaved into p150 and p90 mature proteins.</text>
</comment>
<comment type="function">
    <molecule>Protease/methyltransferase p150</molecule>
    <text evidence="1">Protease that cleaves the precursor polyprotein into two mature products. Together with RNA-directed RNA polymerase p90, replicates the 40S genomic and antigenomic RNA by recognizing replications specific signals. The heterodimer P150/p90 is probably the principal replicase for positive-strand genomic RNA and the 24S subgenomic RNA, which codes for structural proteins. Responsible for the mRNA-capping of the viral mRNAs. This function is necessary since all viral RNAs are synthesized in the cytoplasm, and host capping enzymes are restricted to the nucleus. Forms fibers late in the infection that may be involved in cell-to-cell spread of the virus RNA in the absence of virus particle formation.</text>
</comment>
<comment type="function">
    <molecule>RNA-directed RNA polymerase p90</molecule>
    <text evidence="1">Together with protease/methyltransferase p150, replicates the 40S genomic and antigenomic RNA by recognizing replications specific signals. The heterodimer P150/p90 is probably the principal replicase for positive-strand genomic RNA and the 24S subgenomic RNA, which codes for structural proteins. A helicase activity is probably also present.</text>
</comment>
<comment type="catalytic activity">
    <reaction evidence="1 3">
        <text>RNA(n) + a ribonucleoside 5'-triphosphate = RNA(n+1) + diphosphate</text>
        <dbReference type="Rhea" id="RHEA:21248"/>
        <dbReference type="Rhea" id="RHEA-COMP:14527"/>
        <dbReference type="Rhea" id="RHEA-COMP:17342"/>
        <dbReference type="ChEBI" id="CHEBI:33019"/>
        <dbReference type="ChEBI" id="CHEBI:61557"/>
        <dbReference type="ChEBI" id="CHEBI:140395"/>
        <dbReference type="EC" id="2.7.7.48"/>
    </reaction>
</comment>
<comment type="catalytic activity">
    <reaction evidence="1">
        <text>a ribonucleoside 5'-triphosphate + H2O = a ribonucleoside 5'-diphosphate + phosphate + H(+)</text>
        <dbReference type="Rhea" id="RHEA:23680"/>
        <dbReference type="ChEBI" id="CHEBI:15377"/>
        <dbReference type="ChEBI" id="CHEBI:15378"/>
        <dbReference type="ChEBI" id="CHEBI:43474"/>
        <dbReference type="ChEBI" id="CHEBI:57930"/>
        <dbReference type="ChEBI" id="CHEBI:61557"/>
        <dbReference type="EC" id="3.6.1.15"/>
    </reaction>
</comment>
<comment type="catalytic activity">
    <reaction evidence="1">
        <text>ATP + H2O = ADP + phosphate + H(+)</text>
        <dbReference type="Rhea" id="RHEA:13065"/>
        <dbReference type="ChEBI" id="CHEBI:15377"/>
        <dbReference type="ChEBI" id="CHEBI:15378"/>
        <dbReference type="ChEBI" id="CHEBI:30616"/>
        <dbReference type="ChEBI" id="CHEBI:43474"/>
        <dbReference type="ChEBI" id="CHEBI:456216"/>
        <dbReference type="EC" id="3.6.4.13"/>
    </reaction>
</comment>
<comment type="cofactor">
    <cofactor evidence="6">
        <name>Zn(2+)</name>
        <dbReference type="ChEBI" id="CHEBI:29105"/>
    </cofactor>
    <text evidence="6">Zn(2+) is necessary for the protease activity. The protease can also function efficiently with Cd(2+) and Co(2+).</text>
</comment>
<comment type="subunit">
    <molecule>Protease/methyltransferase p150</molecule>
    <text evidence="10">Interacts with RNA-directed RNA polymerase p90. Interacts with host CALM1; this interaction is necessary for the protease activity and viral infectivity. Interacts with host C1QBP. Interacts with the capsid protein.</text>
</comment>
<comment type="subunit">
    <molecule>RNA-directed RNA polymerase p90</molecule>
    <text evidence="1">Interacts with human RB1/retinoblastoma protein. Interacts with protease/methyltransferase p150.</text>
</comment>
<comment type="subcellular location">
    <molecule>Non-structural polyprotein p200</molecule>
    <subcellularLocation>
        <location evidence="1">Host membrane</location>
    </subcellularLocation>
    <subcellularLocation>
        <location evidence="1">Host cytoplasm</location>
        <location evidence="1">Host perinuclear region</location>
    </subcellularLocation>
    <subcellularLocation>
        <location evidence="1">Host cytoplasm</location>
    </subcellularLocation>
    <text evidence="1">Localizes to cytoplasmic foci at 24 hpi.</text>
</comment>
<comment type="subcellular location">
    <molecule>Protease/methyltransferase p150</molecule>
    <subcellularLocation>
        <location evidence="1">Host membrane</location>
    </subcellularLocation>
    <subcellularLocation>
        <location evidence="1">Host cytoplasm</location>
        <location evidence="1">Host perinuclear region</location>
    </subcellularLocation>
    <subcellularLocation>
        <location evidence="1">Host cytoplasm</location>
    </subcellularLocation>
    <text evidence="1 8 9">At 36 hpi, localizes to the host cytoplasm, probably in vesicles inside host vacuoles of endosomal and lysosomal origin (PubMed:10438871, PubMed:8128633). At 72 hpi, localizes to filamentous structures in the host cytoplasm (By similarity).</text>
</comment>
<comment type="subcellular location">
    <molecule>RNA-directed RNA polymerase p90</molecule>
    <subcellularLocation>
        <location evidence="1">Host membrane</location>
    </subcellularLocation>
    <subcellularLocation>
        <location evidence="1">Host cytoplasm</location>
    </subcellularLocation>
    <text evidence="1">Localizes to the cytoplasm and to the cytoplasmic fibers formed by protease/methyltransferase p150.</text>
</comment>
<comment type="domain">
    <molecule>Protease/methyltransferase p150</molecule>
    <text evidence="1">The N-terminus has a methyltransferase activity for mRNA-capping. The C-terminus harbors a protease active in cis or in trans which specifically cleaves and releases the two mature proteins. Both the N-terminus and C-terminus are required for fiber formation. The N-terminus is involved in associating with membranes. An EF-hand Ca(2+)-binding motif is present in the protease. Also contains 3 SH3-binding motifs that are responsible for the interaction with host C1QBP.</text>
</comment>
<comment type="PTM">
    <molecule>Non-structural polyprotein p200</molecule>
    <text evidence="1">Specific enzymatic cleavage by its own cysteine protease yield mature proteins p150 and p90.</text>
</comment>
<comment type="miscellaneous">
    <text evidence="1">Rubella virus in utero infection has frequently severe consequences on normal fetal development, collectively known as congenital rubella syndrome (CRS). The teratogenicity of the virus is possibly due to the interaction between the p90 protein and the human RB1/retinoblastoma protein.</text>
</comment>